<sequence length="494" mass="55373">MTNIGGPVVENASIEHPVISEEEGAAAFARVMAQLKAQVGIEAYTSWFGRLKLAEYSRNLVKLSVPTAFLRSWINNHYGSLLTNLWKQENSAILRVEVIVRGMKRVSKGVVCRTSAAPVVLEGQTASSFVESYTEPSVKDIEAGVFGSPLDSRYTFESFVEGSSNRVALAAARSIAEGHKSALRFNPLFIHASVGLGKTHLLQAVAAAALKRLMPARVIYLTAEYFMWRFATAIRDNAALSFKEQLRDIDLLIIDDMQFLQGKSIQNEFCHLLNMLLDSAKQVVVAADRPPAELESLDLRVRSRLQGGVALEIEVPDYEMRLKMLRQRLKVVQQDDNMVVISDEVLQYIAKTVLGSGRDIEGAFNQLLFRQSFESDLSLERIDELLGHLTRSGESKRIRIEEIQRAVARHYNVSKQDLLSNRRTRTVVKPRQVAMYLAKMLTPRSLPEIGRRFGGRDHTTVLHAVRKIEDLVCDDQTLAKELELLKRLIGEQAA</sequence>
<organism>
    <name type="scientific">Bartonella quintana (strain Toulouse)</name>
    <name type="common">Rochalimaea quintana</name>
    <dbReference type="NCBI Taxonomy" id="283165"/>
    <lineage>
        <taxon>Bacteria</taxon>
        <taxon>Pseudomonadati</taxon>
        <taxon>Pseudomonadota</taxon>
        <taxon>Alphaproteobacteria</taxon>
        <taxon>Hyphomicrobiales</taxon>
        <taxon>Bartonellaceae</taxon>
        <taxon>Bartonella</taxon>
    </lineage>
</organism>
<reference key="1">
    <citation type="journal article" date="2004" name="Proc. Natl. Acad. Sci. U.S.A.">
        <title>The louse-borne human pathogen Bartonella quintana is a genomic derivative of the zoonotic agent Bartonella henselae.</title>
        <authorList>
            <person name="Alsmark U.C.M."/>
            <person name="Frank A.C."/>
            <person name="Karlberg E.O."/>
            <person name="Legault B.-A."/>
            <person name="Ardell D.H."/>
            <person name="Canbaeck B."/>
            <person name="Eriksson A.-S."/>
            <person name="Naeslund A.K."/>
            <person name="Handley S.A."/>
            <person name="Huvet M."/>
            <person name="La Scola B."/>
            <person name="Holmberg M."/>
            <person name="Andersson S.G.E."/>
        </authorList>
    </citation>
    <scope>NUCLEOTIDE SEQUENCE [LARGE SCALE GENOMIC DNA]</scope>
    <source>
        <strain>Toulouse</strain>
    </source>
</reference>
<accession>Q6G0V6</accession>
<name>DNAA_BARQU</name>
<comment type="function">
    <text evidence="1">Plays an essential role in the initiation and regulation of chromosomal replication. ATP-DnaA binds to the origin of replication (oriC) to initiate formation of the DNA replication initiation complex once per cell cycle. Binds the DnaA box (a 9 base pair repeat at the origin) and separates the double-stranded (ds)DNA. Forms a right-handed helical filament on oriC DNA; dsDNA binds to the exterior of the filament while single-stranded (ss)DNA is stabiized in the filament's interior. The ATP-DnaA-oriC complex binds and stabilizes one strand of the AT-rich DNA unwinding element (DUE), permitting loading of DNA polymerase. After initiation quickly degrades to an ADP-DnaA complex that is not apt for DNA replication. Binds acidic phospholipids.</text>
</comment>
<comment type="subunit">
    <text evidence="1">Oligomerizes as a right-handed, spiral filament on DNA at oriC.</text>
</comment>
<comment type="subcellular location">
    <subcellularLocation>
        <location evidence="1">Cytoplasm</location>
    </subcellularLocation>
</comment>
<comment type="domain">
    <text evidence="1">Domain I is involved in oligomerization and binding regulators, domain II is flexibile and of varying length in different bacteria, domain III forms the AAA+ region, while domain IV binds dsDNA.</text>
</comment>
<comment type="similarity">
    <text evidence="1">Belongs to the DnaA family.</text>
</comment>
<comment type="sequence caution" evidence="2">
    <conflict type="erroneous initiation">
        <sequence resource="EMBL-CDS" id="CAF25617"/>
    </conflict>
</comment>
<evidence type="ECO:0000255" key="1">
    <source>
        <dbReference type="HAMAP-Rule" id="MF_00377"/>
    </source>
</evidence>
<evidence type="ECO:0000305" key="2"/>
<keyword id="KW-0067">ATP-binding</keyword>
<keyword id="KW-0963">Cytoplasm</keyword>
<keyword id="KW-0235">DNA replication</keyword>
<keyword id="KW-0238">DNA-binding</keyword>
<keyword id="KW-0446">Lipid-binding</keyword>
<keyword id="KW-0547">Nucleotide-binding</keyword>
<protein>
    <recommendedName>
        <fullName evidence="1">Chromosomal replication initiator protein DnaA</fullName>
    </recommendedName>
</protein>
<proteinExistence type="inferred from homology"/>
<dbReference type="EMBL" id="BX897700">
    <property type="protein sequence ID" value="CAF25617.1"/>
    <property type="status" value="ALT_INIT"/>
    <property type="molecule type" value="Genomic_DNA"/>
</dbReference>
<dbReference type="SMR" id="Q6G0V6"/>
<dbReference type="KEGG" id="bqu:BQ01110"/>
<dbReference type="eggNOG" id="COG0593">
    <property type="taxonomic scope" value="Bacteria"/>
</dbReference>
<dbReference type="HOGENOM" id="CLU_026910_3_0_5"/>
<dbReference type="Proteomes" id="UP000000597">
    <property type="component" value="Chromosome"/>
</dbReference>
<dbReference type="GO" id="GO:0005737">
    <property type="term" value="C:cytoplasm"/>
    <property type="evidence" value="ECO:0007669"/>
    <property type="project" value="UniProtKB-SubCell"/>
</dbReference>
<dbReference type="GO" id="GO:0005886">
    <property type="term" value="C:plasma membrane"/>
    <property type="evidence" value="ECO:0007669"/>
    <property type="project" value="TreeGrafter"/>
</dbReference>
<dbReference type="GO" id="GO:0005524">
    <property type="term" value="F:ATP binding"/>
    <property type="evidence" value="ECO:0007669"/>
    <property type="project" value="UniProtKB-UniRule"/>
</dbReference>
<dbReference type="GO" id="GO:0016887">
    <property type="term" value="F:ATP hydrolysis activity"/>
    <property type="evidence" value="ECO:0007669"/>
    <property type="project" value="InterPro"/>
</dbReference>
<dbReference type="GO" id="GO:0003688">
    <property type="term" value="F:DNA replication origin binding"/>
    <property type="evidence" value="ECO:0007669"/>
    <property type="project" value="UniProtKB-UniRule"/>
</dbReference>
<dbReference type="GO" id="GO:0008289">
    <property type="term" value="F:lipid binding"/>
    <property type="evidence" value="ECO:0007669"/>
    <property type="project" value="UniProtKB-KW"/>
</dbReference>
<dbReference type="GO" id="GO:0006270">
    <property type="term" value="P:DNA replication initiation"/>
    <property type="evidence" value="ECO:0007669"/>
    <property type="project" value="UniProtKB-UniRule"/>
</dbReference>
<dbReference type="GO" id="GO:0006275">
    <property type="term" value="P:regulation of DNA replication"/>
    <property type="evidence" value="ECO:0007669"/>
    <property type="project" value="UniProtKB-UniRule"/>
</dbReference>
<dbReference type="CDD" id="cd06571">
    <property type="entry name" value="Bac_DnaA_C"/>
    <property type="match status" value="1"/>
</dbReference>
<dbReference type="FunFam" id="1.10.1750.10:FF:000002">
    <property type="entry name" value="Chromosomal replication initiator protein DnaA"/>
    <property type="match status" value="1"/>
</dbReference>
<dbReference type="Gene3D" id="1.10.1750.10">
    <property type="match status" value="1"/>
</dbReference>
<dbReference type="Gene3D" id="1.10.8.60">
    <property type="match status" value="1"/>
</dbReference>
<dbReference type="Gene3D" id="3.30.300.180">
    <property type="match status" value="1"/>
</dbReference>
<dbReference type="Gene3D" id="3.40.50.300">
    <property type="entry name" value="P-loop containing nucleotide triphosphate hydrolases"/>
    <property type="match status" value="1"/>
</dbReference>
<dbReference type="HAMAP" id="MF_00377">
    <property type="entry name" value="DnaA_bact"/>
    <property type="match status" value="1"/>
</dbReference>
<dbReference type="InterPro" id="IPR003593">
    <property type="entry name" value="AAA+_ATPase"/>
</dbReference>
<dbReference type="InterPro" id="IPR001957">
    <property type="entry name" value="Chromosome_initiator_DnaA"/>
</dbReference>
<dbReference type="InterPro" id="IPR020591">
    <property type="entry name" value="Chromosome_initiator_DnaA-like"/>
</dbReference>
<dbReference type="InterPro" id="IPR018312">
    <property type="entry name" value="Chromosome_initiator_DnaA_CS"/>
</dbReference>
<dbReference type="InterPro" id="IPR013159">
    <property type="entry name" value="DnaA_C"/>
</dbReference>
<dbReference type="InterPro" id="IPR013317">
    <property type="entry name" value="DnaA_dom"/>
</dbReference>
<dbReference type="InterPro" id="IPR024633">
    <property type="entry name" value="DnaA_N_dom"/>
</dbReference>
<dbReference type="InterPro" id="IPR038454">
    <property type="entry name" value="DnaA_N_sf"/>
</dbReference>
<dbReference type="InterPro" id="IPR027417">
    <property type="entry name" value="P-loop_NTPase"/>
</dbReference>
<dbReference type="InterPro" id="IPR010921">
    <property type="entry name" value="Trp_repressor/repl_initiator"/>
</dbReference>
<dbReference type="NCBIfam" id="TIGR00362">
    <property type="entry name" value="DnaA"/>
    <property type="match status" value="1"/>
</dbReference>
<dbReference type="PANTHER" id="PTHR30050">
    <property type="entry name" value="CHROMOSOMAL REPLICATION INITIATOR PROTEIN DNAA"/>
    <property type="match status" value="1"/>
</dbReference>
<dbReference type="PANTHER" id="PTHR30050:SF2">
    <property type="entry name" value="CHROMOSOMAL REPLICATION INITIATOR PROTEIN DNAA"/>
    <property type="match status" value="1"/>
</dbReference>
<dbReference type="Pfam" id="PF00308">
    <property type="entry name" value="Bac_DnaA"/>
    <property type="match status" value="1"/>
</dbReference>
<dbReference type="Pfam" id="PF08299">
    <property type="entry name" value="Bac_DnaA_C"/>
    <property type="match status" value="1"/>
</dbReference>
<dbReference type="Pfam" id="PF11638">
    <property type="entry name" value="DnaA_N"/>
    <property type="match status" value="1"/>
</dbReference>
<dbReference type="PRINTS" id="PR00051">
    <property type="entry name" value="DNAA"/>
</dbReference>
<dbReference type="SMART" id="SM00382">
    <property type="entry name" value="AAA"/>
    <property type="match status" value="1"/>
</dbReference>
<dbReference type="SMART" id="SM00760">
    <property type="entry name" value="Bac_DnaA_C"/>
    <property type="match status" value="1"/>
</dbReference>
<dbReference type="SUPFAM" id="SSF52540">
    <property type="entry name" value="P-loop containing nucleoside triphosphate hydrolases"/>
    <property type="match status" value="1"/>
</dbReference>
<dbReference type="SUPFAM" id="SSF48295">
    <property type="entry name" value="TrpR-like"/>
    <property type="match status" value="1"/>
</dbReference>
<dbReference type="PROSITE" id="PS01008">
    <property type="entry name" value="DNAA"/>
    <property type="match status" value="1"/>
</dbReference>
<gene>
    <name evidence="1" type="primary">dnaA</name>
    <name type="ordered locus">BQ01110</name>
</gene>
<feature type="chain" id="PRO_0000114136" description="Chromosomal replication initiator protein DnaA">
    <location>
        <begin position="1"/>
        <end position="494"/>
    </location>
</feature>
<feature type="region of interest" description="Domain I, interacts with DnaA modulators" evidence="1">
    <location>
        <begin position="1"/>
        <end position="103"/>
    </location>
</feature>
<feature type="region of interest" description="Domain II" evidence="1">
    <location>
        <begin position="103"/>
        <end position="148"/>
    </location>
</feature>
<feature type="region of interest" description="Domain III, AAA+ region" evidence="1">
    <location>
        <begin position="149"/>
        <end position="371"/>
    </location>
</feature>
<feature type="region of interest" description="Domain IV, binds dsDNA" evidence="1">
    <location>
        <begin position="372"/>
        <end position="494"/>
    </location>
</feature>
<feature type="binding site" evidence="1">
    <location>
        <position position="195"/>
    </location>
    <ligand>
        <name>ATP</name>
        <dbReference type="ChEBI" id="CHEBI:30616"/>
    </ligand>
</feature>
<feature type="binding site" evidence="1">
    <location>
        <position position="197"/>
    </location>
    <ligand>
        <name>ATP</name>
        <dbReference type="ChEBI" id="CHEBI:30616"/>
    </ligand>
</feature>
<feature type="binding site" evidence="1">
    <location>
        <position position="198"/>
    </location>
    <ligand>
        <name>ATP</name>
        <dbReference type="ChEBI" id="CHEBI:30616"/>
    </ligand>
</feature>
<feature type="binding site" evidence="1">
    <location>
        <position position="199"/>
    </location>
    <ligand>
        <name>ATP</name>
        <dbReference type="ChEBI" id="CHEBI:30616"/>
    </ligand>
</feature>